<evidence type="ECO:0000250" key="1"/>
<evidence type="ECO:0000256" key="2">
    <source>
        <dbReference type="SAM" id="MobiDB-lite"/>
    </source>
</evidence>
<evidence type="ECO:0000305" key="3"/>
<accession>A1CR70</accession>
<sequence>MAPVTLSTVDDDLKEVIQHLFEIQSAVHGYLGPETQQELVRKIKNLTLALSTLSTHTKPHPPPPPPPQPTDPTTAAAPALRDNPDPPLSSIQLPPEIIDYVDAARNPDIYTREFVELVQRGNQDLKGKKEAFASFRDVLAREMRSAMPECRGEVERVLEGTGGKRER</sequence>
<reference key="1">
    <citation type="journal article" date="2008" name="PLoS Genet.">
        <title>Genomic islands in the pathogenic filamentous fungus Aspergillus fumigatus.</title>
        <authorList>
            <person name="Fedorova N.D."/>
            <person name="Khaldi N."/>
            <person name="Joardar V.S."/>
            <person name="Maiti R."/>
            <person name="Amedeo P."/>
            <person name="Anderson M.J."/>
            <person name="Crabtree J."/>
            <person name="Silva J.C."/>
            <person name="Badger J.H."/>
            <person name="Albarraq A."/>
            <person name="Angiuoli S."/>
            <person name="Bussey H."/>
            <person name="Bowyer P."/>
            <person name="Cotty P.J."/>
            <person name="Dyer P.S."/>
            <person name="Egan A."/>
            <person name="Galens K."/>
            <person name="Fraser-Liggett C.M."/>
            <person name="Haas B.J."/>
            <person name="Inman J.M."/>
            <person name="Kent R."/>
            <person name="Lemieux S."/>
            <person name="Malavazi I."/>
            <person name="Orvis J."/>
            <person name="Roemer T."/>
            <person name="Ronning C.M."/>
            <person name="Sundaram J.P."/>
            <person name="Sutton G."/>
            <person name="Turner G."/>
            <person name="Venter J.C."/>
            <person name="White O.R."/>
            <person name="Whitty B.R."/>
            <person name="Youngman P."/>
            <person name="Wolfe K.H."/>
            <person name="Goldman G.H."/>
            <person name="Wortman J.R."/>
            <person name="Jiang B."/>
            <person name="Denning D.W."/>
            <person name="Nierman W.C."/>
        </authorList>
    </citation>
    <scope>NUCLEOTIDE SEQUENCE [LARGE SCALE GENOMIC DNA]</scope>
    <source>
        <strain>ATCC 1007 / CBS 513.65 / DSM 816 / NCTC 3887 / NRRL 1 / QM 1276 / 107</strain>
    </source>
</reference>
<keyword id="KW-0010">Activator</keyword>
<keyword id="KW-0539">Nucleus</keyword>
<keyword id="KW-1185">Reference proteome</keyword>
<keyword id="KW-0804">Transcription</keyword>
<keyword id="KW-0805">Transcription regulation</keyword>
<proteinExistence type="inferred from homology"/>
<protein>
    <recommendedName>
        <fullName>Mediator of RNA polymerase II transcription subunit 10</fullName>
    </recommendedName>
    <alternativeName>
        <fullName>Mediator complex subunit 10</fullName>
    </alternativeName>
</protein>
<name>MED10_ASPCL</name>
<gene>
    <name type="primary">nut2</name>
    <name type="synonym">med10</name>
    <name type="ORF">ACLA_028660</name>
</gene>
<dbReference type="EMBL" id="DS027059">
    <property type="protein sequence ID" value="EAW08141.1"/>
    <property type="molecule type" value="Genomic_DNA"/>
</dbReference>
<dbReference type="RefSeq" id="XP_001269567.1">
    <property type="nucleotide sequence ID" value="XM_001269566.1"/>
</dbReference>
<dbReference type="SMR" id="A1CR70"/>
<dbReference type="STRING" id="344612.A1CR70"/>
<dbReference type="EnsemblFungi" id="EAW08141">
    <property type="protein sequence ID" value="EAW08141"/>
    <property type="gene ID" value="ACLA_028660"/>
</dbReference>
<dbReference type="GeneID" id="4701180"/>
<dbReference type="KEGG" id="act:ACLA_028660"/>
<dbReference type="VEuPathDB" id="FungiDB:ACLA_028660"/>
<dbReference type="eggNOG" id="KOG3046">
    <property type="taxonomic scope" value="Eukaryota"/>
</dbReference>
<dbReference type="HOGENOM" id="CLU_096169_0_0_1"/>
<dbReference type="OMA" id="QYQRAKM"/>
<dbReference type="OrthoDB" id="337270at2759"/>
<dbReference type="Proteomes" id="UP000006701">
    <property type="component" value="Unassembled WGS sequence"/>
</dbReference>
<dbReference type="GO" id="GO:0016592">
    <property type="term" value="C:mediator complex"/>
    <property type="evidence" value="ECO:0007669"/>
    <property type="project" value="InterPro"/>
</dbReference>
<dbReference type="GO" id="GO:0003712">
    <property type="term" value="F:transcription coregulator activity"/>
    <property type="evidence" value="ECO:0007669"/>
    <property type="project" value="InterPro"/>
</dbReference>
<dbReference type="GO" id="GO:0006357">
    <property type="term" value="P:regulation of transcription by RNA polymerase II"/>
    <property type="evidence" value="ECO:0007669"/>
    <property type="project" value="InterPro"/>
</dbReference>
<dbReference type="InterPro" id="IPR019145">
    <property type="entry name" value="Mediator_Med10"/>
</dbReference>
<dbReference type="Pfam" id="PF09748">
    <property type="entry name" value="Med10"/>
    <property type="match status" value="1"/>
</dbReference>
<comment type="function">
    <text evidence="1">Component of the Mediator complex, a coactivator involved in the regulated transcription of nearly all RNA polymerase II-dependent genes. Mediator functions as a bridge to convey information from gene-specific regulatory proteins to the basal RNA polymerase II transcription machinery. Mediator is recruited to promoters by direct interactions with regulatory proteins and serves as a scaffold for the assembly of a functional preinitiation complex with RNA polymerase II and the general transcription factors (By similarity).</text>
</comment>
<comment type="subunit">
    <text evidence="1">Component of the Mediator complex.</text>
</comment>
<comment type="subcellular location">
    <subcellularLocation>
        <location evidence="1">Nucleus</location>
    </subcellularLocation>
</comment>
<comment type="similarity">
    <text evidence="3">Belongs to the Mediator complex subunit 10 family.</text>
</comment>
<organism>
    <name type="scientific">Aspergillus clavatus (strain ATCC 1007 / CBS 513.65 / DSM 816 / NCTC 3887 / NRRL 1 / QM 1276 / 107)</name>
    <dbReference type="NCBI Taxonomy" id="344612"/>
    <lineage>
        <taxon>Eukaryota</taxon>
        <taxon>Fungi</taxon>
        <taxon>Dikarya</taxon>
        <taxon>Ascomycota</taxon>
        <taxon>Pezizomycotina</taxon>
        <taxon>Eurotiomycetes</taxon>
        <taxon>Eurotiomycetidae</taxon>
        <taxon>Eurotiales</taxon>
        <taxon>Aspergillaceae</taxon>
        <taxon>Aspergillus</taxon>
        <taxon>Aspergillus subgen. Fumigati</taxon>
    </lineage>
</organism>
<feature type="chain" id="PRO_0000303163" description="Mediator of RNA polymerase II transcription subunit 10">
    <location>
        <begin position="1"/>
        <end position="167"/>
    </location>
</feature>
<feature type="region of interest" description="Disordered" evidence="2">
    <location>
        <begin position="54"/>
        <end position="92"/>
    </location>
</feature>
<feature type="compositionally biased region" description="Pro residues" evidence="2">
    <location>
        <begin position="60"/>
        <end position="70"/>
    </location>
</feature>